<dbReference type="EMBL" id="CP000431">
    <property type="protein sequence ID" value="ABG92790.1"/>
    <property type="molecule type" value="Genomic_DNA"/>
</dbReference>
<dbReference type="RefSeq" id="WP_005247390.1">
    <property type="nucleotide sequence ID" value="NC_008268.1"/>
</dbReference>
<dbReference type="SMR" id="Q0SI46"/>
<dbReference type="GeneID" id="69892620"/>
<dbReference type="KEGG" id="rha:RHA1_ro00962"/>
<dbReference type="eggNOG" id="COG0291">
    <property type="taxonomic scope" value="Bacteria"/>
</dbReference>
<dbReference type="HOGENOM" id="CLU_169643_4_2_11"/>
<dbReference type="OrthoDB" id="9804851at2"/>
<dbReference type="Proteomes" id="UP000008710">
    <property type="component" value="Chromosome"/>
</dbReference>
<dbReference type="GO" id="GO:0022625">
    <property type="term" value="C:cytosolic large ribosomal subunit"/>
    <property type="evidence" value="ECO:0007669"/>
    <property type="project" value="TreeGrafter"/>
</dbReference>
<dbReference type="GO" id="GO:0003735">
    <property type="term" value="F:structural constituent of ribosome"/>
    <property type="evidence" value="ECO:0007669"/>
    <property type="project" value="InterPro"/>
</dbReference>
<dbReference type="GO" id="GO:0006412">
    <property type="term" value="P:translation"/>
    <property type="evidence" value="ECO:0007669"/>
    <property type="project" value="UniProtKB-UniRule"/>
</dbReference>
<dbReference type="FunFam" id="4.10.410.60:FF:000001">
    <property type="entry name" value="50S ribosomal protein L35"/>
    <property type="match status" value="1"/>
</dbReference>
<dbReference type="Gene3D" id="4.10.410.60">
    <property type="match status" value="1"/>
</dbReference>
<dbReference type="HAMAP" id="MF_00514">
    <property type="entry name" value="Ribosomal_bL35"/>
    <property type="match status" value="1"/>
</dbReference>
<dbReference type="InterPro" id="IPR001706">
    <property type="entry name" value="Ribosomal_bL35"/>
</dbReference>
<dbReference type="InterPro" id="IPR021137">
    <property type="entry name" value="Ribosomal_bL35-like"/>
</dbReference>
<dbReference type="InterPro" id="IPR037229">
    <property type="entry name" value="Ribosomal_bL35_sf"/>
</dbReference>
<dbReference type="NCBIfam" id="TIGR00001">
    <property type="entry name" value="rpmI_bact"/>
    <property type="match status" value="1"/>
</dbReference>
<dbReference type="PANTHER" id="PTHR33343">
    <property type="entry name" value="54S RIBOSOMAL PROTEIN BL35M"/>
    <property type="match status" value="1"/>
</dbReference>
<dbReference type="PANTHER" id="PTHR33343:SF1">
    <property type="entry name" value="LARGE RIBOSOMAL SUBUNIT PROTEIN BL35M"/>
    <property type="match status" value="1"/>
</dbReference>
<dbReference type="Pfam" id="PF01632">
    <property type="entry name" value="Ribosomal_L35p"/>
    <property type="match status" value="1"/>
</dbReference>
<dbReference type="PRINTS" id="PR00064">
    <property type="entry name" value="RIBOSOMALL35"/>
</dbReference>
<dbReference type="SUPFAM" id="SSF143034">
    <property type="entry name" value="L35p-like"/>
    <property type="match status" value="1"/>
</dbReference>
<keyword id="KW-0687">Ribonucleoprotein</keyword>
<keyword id="KW-0689">Ribosomal protein</keyword>
<feature type="chain" id="PRO_0000258737" description="Large ribosomal subunit protein bL35">
    <location>
        <begin position="1"/>
        <end position="64"/>
    </location>
</feature>
<feature type="region of interest" description="Disordered" evidence="2">
    <location>
        <begin position="1"/>
        <end position="23"/>
    </location>
</feature>
<feature type="compositionally biased region" description="Basic residues" evidence="2">
    <location>
        <begin position="1"/>
        <end position="15"/>
    </location>
</feature>
<name>RL35_RHOJR</name>
<proteinExistence type="inferred from homology"/>
<gene>
    <name evidence="1" type="primary">rpmI</name>
    <name type="ordered locus">RHA1_ro00962</name>
</gene>
<sequence length="64" mass="7131">MPKSKTHSGTAKRFKVSGSGKILRQKAGRRHLLEHKATKVTRRLDGVAVVSKADTPRIKRLLDI</sequence>
<protein>
    <recommendedName>
        <fullName evidence="1">Large ribosomal subunit protein bL35</fullName>
    </recommendedName>
    <alternativeName>
        <fullName evidence="3">50S ribosomal protein L35</fullName>
    </alternativeName>
</protein>
<accession>Q0SI46</accession>
<organism>
    <name type="scientific">Rhodococcus jostii (strain RHA1)</name>
    <dbReference type="NCBI Taxonomy" id="101510"/>
    <lineage>
        <taxon>Bacteria</taxon>
        <taxon>Bacillati</taxon>
        <taxon>Actinomycetota</taxon>
        <taxon>Actinomycetes</taxon>
        <taxon>Mycobacteriales</taxon>
        <taxon>Nocardiaceae</taxon>
        <taxon>Rhodococcus</taxon>
    </lineage>
</organism>
<comment type="similarity">
    <text evidence="1">Belongs to the bacterial ribosomal protein bL35 family.</text>
</comment>
<reference key="1">
    <citation type="journal article" date="2006" name="Proc. Natl. Acad. Sci. U.S.A.">
        <title>The complete genome of Rhodococcus sp. RHA1 provides insights into a catabolic powerhouse.</title>
        <authorList>
            <person name="McLeod M.P."/>
            <person name="Warren R.L."/>
            <person name="Hsiao W.W.L."/>
            <person name="Araki N."/>
            <person name="Myhre M."/>
            <person name="Fernandes C."/>
            <person name="Miyazawa D."/>
            <person name="Wong W."/>
            <person name="Lillquist A.L."/>
            <person name="Wang D."/>
            <person name="Dosanjh M."/>
            <person name="Hara H."/>
            <person name="Petrescu A."/>
            <person name="Morin R.D."/>
            <person name="Yang G."/>
            <person name="Stott J.M."/>
            <person name="Schein J.E."/>
            <person name="Shin H."/>
            <person name="Smailus D."/>
            <person name="Siddiqui A.S."/>
            <person name="Marra M.A."/>
            <person name="Jones S.J.M."/>
            <person name="Holt R."/>
            <person name="Brinkman F.S.L."/>
            <person name="Miyauchi K."/>
            <person name="Fukuda M."/>
            <person name="Davies J.E."/>
            <person name="Mohn W.W."/>
            <person name="Eltis L.D."/>
        </authorList>
    </citation>
    <scope>NUCLEOTIDE SEQUENCE [LARGE SCALE GENOMIC DNA]</scope>
    <source>
        <strain>RHA1</strain>
    </source>
</reference>
<evidence type="ECO:0000255" key="1">
    <source>
        <dbReference type="HAMAP-Rule" id="MF_00514"/>
    </source>
</evidence>
<evidence type="ECO:0000256" key="2">
    <source>
        <dbReference type="SAM" id="MobiDB-lite"/>
    </source>
</evidence>
<evidence type="ECO:0000305" key="3"/>